<name>TFP11_DANRE</name>
<protein>
    <recommendedName>
        <fullName>Tuftelin-interacting protein 11</fullName>
    </recommendedName>
    <alternativeName>
        <fullName>Septin and tuftelin-interacting protein 1</fullName>
        <shortName>STIP-1</shortName>
    </alternativeName>
</protein>
<evidence type="ECO:0000250" key="1"/>
<evidence type="ECO:0000255" key="2">
    <source>
        <dbReference type="PROSITE-ProRule" id="PRU00092"/>
    </source>
</evidence>
<evidence type="ECO:0000256" key="3">
    <source>
        <dbReference type="SAM" id="MobiDB-lite"/>
    </source>
</evidence>
<evidence type="ECO:0000269" key="4">
    <source>
    </source>
</evidence>
<evidence type="ECO:0000305" key="5"/>
<accession>Q6DI35</accession>
<reference key="1">
    <citation type="submission" date="2005-06" db="EMBL/GenBank/DDBJ databases">
        <authorList>
            <consortium name="NIH - Zebrafish Gene Collection (ZGC) project"/>
        </authorList>
    </citation>
    <scope>NUCLEOTIDE SEQUENCE [LARGE SCALE MRNA]</scope>
    <source>
        <strain>AB</strain>
        <tissue>Embryo</tissue>
    </source>
</reference>
<reference key="2">
    <citation type="journal article" date="2008" name="J. Proteome Res.">
        <title>Online automated in vivo zebrafish phosphoproteomics: from large-scale analysis down to a single embryo.</title>
        <authorList>
            <person name="Lemeer S."/>
            <person name="Pinkse M.W.H."/>
            <person name="Mohammed S."/>
            <person name="van Breukelen B."/>
            <person name="den Hertog J."/>
            <person name="Slijper M."/>
            <person name="Heck A.J.R."/>
        </authorList>
    </citation>
    <scope>PHOSPHORYLATION [LARGE SCALE ANALYSIS] AT SER-209</scope>
    <scope>IDENTIFICATION BY MASS SPECTROMETRY</scope>
    <source>
        <tissue>Embryo</tissue>
    </source>
</reference>
<proteinExistence type="evidence at protein level"/>
<dbReference type="EMBL" id="BC075755">
    <property type="protein sequence ID" value="AAH75755.1"/>
    <property type="molecule type" value="mRNA"/>
</dbReference>
<dbReference type="EMBL" id="BC096995">
    <property type="protein sequence ID" value="AAH96995.1"/>
    <property type="molecule type" value="mRNA"/>
</dbReference>
<dbReference type="RefSeq" id="NP_001002721.1">
    <property type="nucleotide sequence ID" value="NM_001002721.1"/>
</dbReference>
<dbReference type="SMR" id="Q6DI35"/>
<dbReference type="FunCoup" id="Q6DI35">
    <property type="interactions" value="2476"/>
</dbReference>
<dbReference type="STRING" id="7955.ENSDARP00000073961"/>
<dbReference type="iPTMnet" id="Q6DI35"/>
<dbReference type="PaxDb" id="7955-ENSDARP00000073961"/>
<dbReference type="GeneID" id="436994"/>
<dbReference type="KEGG" id="dre:436994"/>
<dbReference type="AGR" id="ZFIN:ZDB-GENE-040718-479"/>
<dbReference type="CTD" id="24144"/>
<dbReference type="ZFIN" id="ZDB-GENE-040718-479">
    <property type="gene designation" value="tfip11"/>
</dbReference>
<dbReference type="eggNOG" id="KOG2184">
    <property type="taxonomic scope" value="Eukaryota"/>
</dbReference>
<dbReference type="InParanoid" id="Q6DI35"/>
<dbReference type="OrthoDB" id="4822at2759"/>
<dbReference type="PhylomeDB" id="Q6DI35"/>
<dbReference type="PRO" id="PR:Q6DI35"/>
<dbReference type="Proteomes" id="UP000000437">
    <property type="component" value="Chromosome 23"/>
</dbReference>
<dbReference type="GO" id="GO:0005681">
    <property type="term" value="C:spliceosomal complex"/>
    <property type="evidence" value="ECO:0000250"/>
    <property type="project" value="UniProtKB"/>
</dbReference>
<dbReference type="GO" id="GO:0071008">
    <property type="term" value="C:U2-type post-mRNA release spliceosomal complex"/>
    <property type="evidence" value="ECO:0000318"/>
    <property type="project" value="GO_Central"/>
</dbReference>
<dbReference type="GO" id="GO:0003676">
    <property type="term" value="F:nucleic acid binding"/>
    <property type="evidence" value="ECO:0007669"/>
    <property type="project" value="InterPro"/>
</dbReference>
<dbReference type="GO" id="GO:0000390">
    <property type="term" value="P:spliceosomal complex disassembly"/>
    <property type="evidence" value="ECO:0000318"/>
    <property type="project" value="GO_Central"/>
</dbReference>
<dbReference type="InterPro" id="IPR000467">
    <property type="entry name" value="G_patch_dom"/>
</dbReference>
<dbReference type="InterPro" id="IPR022783">
    <property type="entry name" value="GCFC_dom"/>
</dbReference>
<dbReference type="InterPro" id="IPR022159">
    <property type="entry name" value="STIP/TFIP11_N"/>
</dbReference>
<dbReference type="InterPro" id="IPR024933">
    <property type="entry name" value="TFP11"/>
</dbReference>
<dbReference type="InterPro" id="IPR045211">
    <property type="entry name" value="TFP11/STIP/Ntr1"/>
</dbReference>
<dbReference type="PANTHER" id="PTHR23329:SF1">
    <property type="entry name" value="TUFTELIN-INTERACTING PROTEIN 11"/>
    <property type="match status" value="1"/>
</dbReference>
<dbReference type="PANTHER" id="PTHR23329">
    <property type="entry name" value="TUFTELIN-INTERACTING PROTEIN 11-RELATED"/>
    <property type="match status" value="1"/>
</dbReference>
<dbReference type="Pfam" id="PF01585">
    <property type="entry name" value="G-patch"/>
    <property type="match status" value="1"/>
</dbReference>
<dbReference type="Pfam" id="PF07842">
    <property type="entry name" value="GCFC"/>
    <property type="match status" value="1"/>
</dbReference>
<dbReference type="Pfam" id="PF12457">
    <property type="entry name" value="TIP_N"/>
    <property type="match status" value="1"/>
</dbReference>
<dbReference type="PIRSF" id="PIRSF017706">
    <property type="entry name" value="TFIP11"/>
    <property type="match status" value="1"/>
</dbReference>
<dbReference type="SMART" id="SM00443">
    <property type="entry name" value="G_patch"/>
    <property type="match status" value="1"/>
</dbReference>
<dbReference type="PROSITE" id="PS50174">
    <property type="entry name" value="G_PATCH"/>
    <property type="match status" value="1"/>
</dbReference>
<gene>
    <name type="primary">tfip11</name>
    <name type="synonym">stip</name>
    <name type="ORF">zgc:86644</name>
</gene>
<keyword id="KW-0507">mRNA processing</keyword>
<keyword id="KW-0508">mRNA splicing</keyword>
<keyword id="KW-0539">Nucleus</keyword>
<keyword id="KW-0597">Phosphoprotein</keyword>
<keyword id="KW-1185">Reference proteome</keyword>
<keyword id="KW-0747">Spliceosome</keyword>
<sequence>MSMSHLYGRRGDEEEEDGVEIEKFEVSEWDLANEFNPDRRRYRQTKEEATYGIWAEQDSDDERPSFGGKRAKDYSTPVSFVSAGLRKTAAEEKAEREGSDDSDAEEAPPPPRAAAPKKLQTGGSFKTSQRFAGGIRTGQDLGNWEKHTRGIGQKLLQKMGYVPGKGLGKNAQGIVNPIEAKLRKGKGAVGAYGSERTQQSLQDFPVVDSEEEEEEEFQKELGQWRKEPGTAKKKPKYSYRTVDDLKAHGTRANMSMSRPAGELAQVKVIDMTGREQKVYNSYSHMSQKHSVPEEAPLSVSTREQKSSGFALPELEHNLKLLIELTEQDILQSARLLQHEKDTVVTLTHESDALQVRLAEEEETLGRLEQVMSLVERFEAGDKEGDPALSLQECAKIFEQLQTEFYQEYKTMGLGDLAVSVVHPLLKEKLRNWDPLKDCSDGLEEVGQWRAILESTLSLHSGPDTTNMDPYHRLIWEVWVPVMRTCVSQWQPRNVGPMVDCVECWAPVLPLWILDHVLEQLIFPRLQREVDNWNPLTDTVPIHSWIHPWLPLMQTRLEPLYAPIRSKLAHALQRWHPSDSSARLILQPWRDVFTPGAWEAFMVKNIVPKLALCLGELVVNPHQQLLDPFNWVMDWECMLSVSSMVGLLDKNFFPKWLQVLCSWLSNNPNYEEITKWYLGWKGLLSENLLSHPLVKEKLNEALDIMNRAVASGLGGYMQPGARENIAYLIQTERRKDFQCELQPERREVDNSATRPPGMAAVPASVPTNFKDLVQAKAEENGIVFMPLVAKRHMGKQLFTFGRIVIYIERGVVFVQGEKTWVPTSLQSLIDMAK</sequence>
<feature type="chain" id="PRO_0000342280" description="Tuftelin-interacting protein 11">
    <location>
        <begin position="1"/>
        <end position="832"/>
    </location>
</feature>
<feature type="domain" description="G-patch" evidence="2">
    <location>
        <begin position="148"/>
        <end position="194"/>
    </location>
</feature>
<feature type="region of interest" description="Disordered" evidence="3">
    <location>
        <begin position="1"/>
        <end position="21"/>
    </location>
</feature>
<feature type="region of interest" description="Disordered" evidence="3">
    <location>
        <begin position="33"/>
        <end position="145"/>
    </location>
</feature>
<feature type="compositionally biased region" description="Basic and acidic residues" evidence="3">
    <location>
        <begin position="36"/>
        <end position="49"/>
    </location>
</feature>
<feature type="compositionally biased region" description="Basic and acidic residues" evidence="3">
    <location>
        <begin position="88"/>
        <end position="99"/>
    </location>
</feature>
<feature type="compositionally biased region" description="Polar residues" evidence="3">
    <location>
        <begin position="121"/>
        <end position="130"/>
    </location>
</feature>
<feature type="modified residue" description="Phosphoserine" evidence="4">
    <location>
        <position position="209"/>
    </location>
</feature>
<comment type="function">
    <text evidence="1">Involved in pre-mRNA splicing, specifically in spliceosome disassembly during late-stage splicing events.</text>
</comment>
<comment type="subunit">
    <text evidence="1">Identified in the spliceosome C complex.</text>
</comment>
<comment type="subcellular location">
    <subcellularLocation>
        <location evidence="1">Nucleus</location>
    </subcellularLocation>
</comment>
<comment type="similarity">
    <text evidence="5">Belongs to the TFP11/STIP family.</text>
</comment>
<organism>
    <name type="scientific">Danio rerio</name>
    <name type="common">Zebrafish</name>
    <name type="synonym">Brachydanio rerio</name>
    <dbReference type="NCBI Taxonomy" id="7955"/>
    <lineage>
        <taxon>Eukaryota</taxon>
        <taxon>Metazoa</taxon>
        <taxon>Chordata</taxon>
        <taxon>Craniata</taxon>
        <taxon>Vertebrata</taxon>
        <taxon>Euteleostomi</taxon>
        <taxon>Actinopterygii</taxon>
        <taxon>Neopterygii</taxon>
        <taxon>Teleostei</taxon>
        <taxon>Ostariophysi</taxon>
        <taxon>Cypriniformes</taxon>
        <taxon>Danionidae</taxon>
        <taxon>Danioninae</taxon>
        <taxon>Danio</taxon>
    </lineage>
</organism>